<accession>A1R5S1</accession>
<protein>
    <recommendedName>
        <fullName evidence="1">Imidazole glycerol phosphate synthase subunit HisF</fullName>
        <ecNumber evidence="1">4.3.2.10</ecNumber>
    </recommendedName>
    <alternativeName>
        <fullName evidence="1">IGP synthase cyclase subunit</fullName>
    </alternativeName>
    <alternativeName>
        <fullName evidence="1">IGP synthase subunit HisF</fullName>
    </alternativeName>
    <alternativeName>
        <fullName evidence="1">ImGP synthase subunit HisF</fullName>
        <shortName evidence="1">IGPS subunit HisF</shortName>
    </alternativeName>
</protein>
<organism>
    <name type="scientific">Paenarthrobacter aurescens (strain TC1)</name>
    <dbReference type="NCBI Taxonomy" id="290340"/>
    <lineage>
        <taxon>Bacteria</taxon>
        <taxon>Bacillati</taxon>
        <taxon>Actinomycetota</taxon>
        <taxon>Actinomycetes</taxon>
        <taxon>Micrococcales</taxon>
        <taxon>Micrococcaceae</taxon>
        <taxon>Paenarthrobacter</taxon>
    </lineage>
</organism>
<reference key="1">
    <citation type="journal article" date="2006" name="PLoS Genet.">
        <title>Secrets of soil survival revealed by the genome sequence of Arthrobacter aurescens TC1.</title>
        <authorList>
            <person name="Mongodin E.F."/>
            <person name="Shapir N."/>
            <person name="Daugherty S.C."/>
            <person name="DeBoy R.T."/>
            <person name="Emerson J.B."/>
            <person name="Shvartzbeyn A."/>
            <person name="Radune D."/>
            <person name="Vamathevan J."/>
            <person name="Riggs F."/>
            <person name="Grinberg V."/>
            <person name="Khouri H.M."/>
            <person name="Wackett L.P."/>
            <person name="Nelson K.E."/>
            <person name="Sadowsky M.J."/>
        </authorList>
    </citation>
    <scope>NUCLEOTIDE SEQUENCE [LARGE SCALE GENOMIC DNA]</scope>
    <source>
        <strain>TC1</strain>
    </source>
</reference>
<proteinExistence type="inferred from homology"/>
<gene>
    <name evidence="1" type="primary">hisF</name>
    <name type="ordered locus">AAur_1832</name>
</gene>
<feature type="chain" id="PRO_1000063022" description="Imidazole glycerol phosphate synthase subunit HisF">
    <location>
        <begin position="1"/>
        <end position="258"/>
    </location>
</feature>
<feature type="active site" evidence="1">
    <location>
        <position position="12"/>
    </location>
</feature>
<feature type="active site" evidence="1">
    <location>
        <position position="131"/>
    </location>
</feature>
<evidence type="ECO:0000255" key="1">
    <source>
        <dbReference type="HAMAP-Rule" id="MF_01013"/>
    </source>
</evidence>
<comment type="function">
    <text evidence="1">IGPS catalyzes the conversion of PRFAR and glutamine to IGP, AICAR and glutamate. The HisF subunit catalyzes the cyclization activity that produces IGP and AICAR from PRFAR using the ammonia provided by the HisH subunit.</text>
</comment>
<comment type="catalytic activity">
    <reaction evidence="1">
        <text>5-[(5-phospho-1-deoxy-D-ribulos-1-ylimino)methylamino]-1-(5-phospho-beta-D-ribosyl)imidazole-4-carboxamide + L-glutamine = D-erythro-1-(imidazol-4-yl)glycerol 3-phosphate + 5-amino-1-(5-phospho-beta-D-ribosyl)imidazole-4-carboxamide + L-glutamate + H(+)</text>
        <dbReference type="Rhea" id="RHEA:24793"/>
        <dbReference type="ChEBI" id="CHEBI:15378"/>
        <dbReference type="ChEBI" id="CHEBI:29985"/>
        <dbReference type="ChEBI" id="CHEBI:58278"/>
        <dbReference type="ChEBI" id="CHEBI:58359"/>
        <dbReference type="ChEBI" id="CHEBI:58475"/>
        <dbReference type="ChEBI" id="CHEBI:58525"/>
        <dbReference type="EC" id="4.3.2.10"/>
    </reaction>
</comment>
<comment type="pathway">
    <text evidence="1">Amino-acid biosynthesis; L-histidine biosynthesis; L-histidine from 5-phospho-alpha-D-ribose 1-diphosphate: step 5/9.</text>
</comment>
<comment type="subunit">
    <text evidence="1">Heterodimer of HisH and HisF.</text>
</comment>
<comment type="subcellular location">
    <subcellularLocation>
        <location evidence="1">Cytoplasm</location>
    </subcellularLocation>
</comment>
<comment type="similarity">
    <text evidence="1">Belongs to the HisA/HisF family.</text>
</comment>
<dbReference type="EC" id="4.3.2.10" evidence="1"/>
<dbReference type="EMBL" id="CP000474">
    <property type="protein sequence ID" value="ABM07790.1"/>
    <property type="molecule type" value="Genomic_DNA"/>
</dbReference>
<dbReference type="RefSeq" id="WP_011774527.1">
    <property type="nucleotide sequence ID" value="NC_008711.1"/>
</dbReference>
<dbReference type="SMR" id="A1R5S1"/>
<dbReference type="STRING" id="290340.AAur_1832"/>
<dbReference type="KEGG" id="aau:AAur_1832"/>
<dbReference type="eggNOG" id="COG0107">
    <property type="taxonomic scope" value="Bacteria"/>
</dbReference>
<dbReference type="HOGENOM" id="CLU_048577_4_0_11"/>
<dbReference type="OrthoDB" id="9781903at2"/>
<dbReference type="UniPathway" id="UPA00031">
    <property type="reaction ID" value="UER00010"/>
</dbReference>
<dbReference type="Proteomes" id="UP000000637">
    <property type="component" value="Chromosome"/>
</dbReference>
<dbReference type="GO" id="GO:0005737">
    <property type="term" value="C:cytoplasm"/>
    <property type="evidence" value="ECO:0007669"/>
    <property type="project" value="UniProtKB-SubCell"/>
</dbReference>
<dbReference type="GO" id="GO:0000107">
    <property type="term" value="F:imidazoleglycerol-phosphate synthase activity"/>
    <property type="evidence" value="ECO:0007669"/>
    <property type="project" value="UniProtKB-UniRule"/>
</dbReference>
<dbReference type="GO" id="GO:0016829">
    <property type="term" value="F:lyase activity"/>
    <property type="evidence" value="ECO:0007669"/>
    <property type="project" value="UniProtKB-KW"/>
</dbReference>
<dbReference type="GO" id="GO:0000105">
    <property type="term" value="P:L-histidine biosynthetic process"/>
    <property type="evidence" value="ECO:0007669"/>
    <property type="project" value="UniProtKB-UniRule"/>
</dbReference>
<dbReference type="CDD" id="cd04731">
    <property type="entry name" value="HisF"/>
    <property type="match status" value="1"/>
</dbReference>
<dbReference type="Gene3D" id="3.20.20.70">
    <property type="entry name" value="Aldolase class I"/>
    <property type="match status" value="1"/>
</dbReference>
<dbReference type="HAMAP" id="MF_01013">
    <property type="entry name" value="HisF"/>
    <property type="match status" value="1"/>
</dbReference>
<dbReference type="InterPro" id="IPR013785">
    <property type="entry name" value="Aldolase_TIM"/>
</dbReference>
<dbReference type="InterPro" id="IPR006062">
    <property type="entry name" value="His_biosynth"/>
</dbReference>
<dbReference type="InterPro" id="IPR004651">
    <property type="entry name" value="HisF"/>
</dbReference>
<dbReference type="InterPro" id="IPR050064">
    <property type="entry name" value="IGPS_HisA/HisF"/>
</dbReference>
<dbReference type="InterPro" id="IPR011060">
    <property type="entry name" value="RibuloseP-bd_barrel"/>
</dbReference>
<dbReference type="NCBIfam" id="TIGR00735">
    <property type="entry name" value="hisF"/>
    <property type="match status" value="1"/>
</dbReference>
<dbReference type="PANTHER" id="PTHR21235:SF2">
    <property type="entry name" value="IMIDAZOLE GLYCEROL PHOSPHATE SYNTHASE HISHF"/>
    <property type="match status" value="1"/>
</dbReference>
<dbReference type="PANTHER" id="PTHR21235">
    <property type="entry name" value="IMIDAZOLE GLYCEROL PHOSPHATE SYNTHASE SUBUNIT HISF/H IGP SYNTHASE SUBUNIT HISF/H"/>
    <property type="match status" value="1"/>
</dbReference>
<dbReference type="Pfam" id="PF00977">
    <property type="entry name" value="His_biosynth"/>
    <property type="match status" value="1"/>
</dbReference>
<dbReference type="SUPFAM" id="SSF51366">
    <property type="entry name" value="Ribulose-phoshate binding barrel"/>
    <property type="match status" value="1"/>
</dbReference>
<keyword id="KW-0028">Amino-acid biosynthesis</keyword>
<keyword id="KW-0963">Cytoplasm</keyword>
<keyword id="KW-0368">Histidine biosynthesis</keyword>
<keyword id="KW-0456">Lyase</keyword>
<sequence>MAVAVRVIPCLDVDAGRVVKGVNFEGLRDAGDPVELAHRYDNGGADELTFLDVTASSGNRETTFDVVRRTAEEVFIPLTVGGGVRGVAEVDKLLRFGADKASINTAAVARPDVIDEITRHFGSQVLVLSVDARRTREGDQPTSSGFEVTTHGGRTGTGIDAVAWAKEAADRGVGEILLNSIDADGTKDGFDLELIRLVRAAVNIPIIASGGAGVPAHFPPAVEAGADAVLAASVFHFGPDDMIAQVKTAIRDAGFEVR</sequence>
<name>HIS6_PAEAT</name>